<keyword id="KW-0414">Isoprene biosynthesis</keyword>
<keyword id="KW-0456">Lyase</keyword>
<keyword id="KW-0479">Metal-binding</keyword>
<keyword id="KW-1185">Reference proteome</keyword>
<evidence type="ECO:0000255" key="1">
    <source>
        <dbReference type="HAMAP-Rule" id="MF_00107"/>
    </source>
</evidence>
<dbReference type="EC" id="4.6.1.12" evidence="1"/>
<dbReference type="EMBL" id="CP000236">
    <property type="protein sequence ID" value="ABD45293.1"/>
    <property type="molecule type" value="Genomic_DNA"/>
</dbReference>
<dbReference type="RefSeq" id="WP_006010158.1">
    <property type="nucleotide sequence ID" value="NC_007799.1"/>
</dbReference>
<dbReference type="SMR" id="Q2GHV0"/>
<dbReference type="STRING" id="205920.ECH_0156"/>
<dbReference type="KEGG" id="ech:ECH_0156"/>
<dbReference type="eggNOG" id="COG0245">
    <property type="taxonomic scope" value="Bacteria"/>
</dbReference>
<dbReference type="HOGENOM" id="CLU_084630_2_0_5"/>
<dbReference type="OrthoDB" id="9804336at2"/>
<dbReference type="UniPathway" id="UPA00056">
    <property type="reaction ID" value="UER00095"/>
</dbReference>
<dbReference type="Proteomes" id="UP000008320">
    <property type="component" value="Chromosome"/>
</dbReference>
<dbReference type="GO" id="GO:0008685">
    <property type="term" value="F:2-C-methyl-D-erythritol 2,4-cyclodiphosphate synthase activity"/>
    <property type="evidence" value="ECO:0007669"/>
    <property type="project" value="UniProtKB-UniRule"/>
</dbReference>
<dbReference type="GO" id="GO:0046872">
    <property type="term" value="F:metal ion binding"/>
    <property type="evidence" value="ECO:0007669"/>
    <property type="project" value="UniProtKB-KW"/>
</dbReference>
<dbReference type="GO" id="GO:0019288">
    <property type="term" value="P:isopentenyl diphosphate biosynthetic process, methylerythritol 4-phosphate pathway"/>
    <property type="evidence" value="ECO:0007669"/>
    <property type="project" value="UniProtKB-UniRule"/>
</dbReference>
<dbReference type="GO" id="GO:0016114">
    <property type="term" value="P:terpenoid biosynthetic process"/>
    <property type="evidence" value="ECO:0007669"/>
    <property type="project" value="InterPro"/>
</dbReference>
<dbReference type="CDD" id="cd00554">
    <property type="entry name" value="MECDP_synthase"/>
    <property type="match status" value="1"/>
</dbReference>
<dbReference type="Gene3D" id="3.30.1330.50">
    <property type="entry name" value="2-C-methyl-D-erythritol 2,4-cyclodiphosphate synthase"/>
    <property type="match status" value="1"/>
</dbReference>
<dbReference type="HAMAP" id="MF_00107">
    <property type="entry name" value="IspF"/>
    <property type="match status" value="1"/>
</dbReference>
<dbReference type="InterPro" id="IPR003526">
    <property type="entry name" value="MECDP_synthase"/>
</dbReference>
<dbReference type="InterPro" id="IPR020555">
    <property type="entry name" value="MECDP_synthase_CS"/>
</dbReference>
<dbReference type="InterPro" id="IPR036571">
    <property type="entry name" value="MECDP_synthase_sf"/>
</dbReference>
<dbReference type="NCBIfam" id="TIGR00151">
    <property type="entry name" value="ispF"/>
    <property type="match status" value="1"/>
</dbReference>
<dbReference type="PANTHER" id="PTHR43181">
    <property type="entry name" value="2-C-METHYL-D-ERYTHRITOL 2,4-CYCLODIPHOSPHATE SYNTHASE, CHLOROPLASTIC"/>
    <property type="match status" value="1"/>
</dbReference>
<dbReference type="PANTHER" id="PTHR43181:SF1">
    <property type="entry name" value="2-C-METHYL-D-ERYTHRITOL 2,4-CYCLODIPHOSPHATE SYNTHASE, CHLOROPLASTIC"/>
    <property type="match status" value="1"/>
</dbReference>
<dbReference type="Pfam" id="PF02542">
    <property type="entry name" value="YgbB"/>
    <property type="match status" value="1"/>
</dbReference>
<dbReference type="SUPFAM" id="SSF69765">
    <property type="entry name" value="IpsF-like"/>
    <property type="match status" value="1"/>
</dbReference>
<dbReference type="PROSITE" id="PS01350">
    <property type="entry name" value="ISPF"/>
    <property type="match status" value="1"/>
</dbReference>
<comment type="function">
    <text evidence="1">Involved in the biosynthesis of isopentenyl diphosphate (IPP) and dimethylallyl diphosphate (DMAPP), two major building blocks of isoprenoid compounds. Catalyzes the conversion of 4-diphosphocytidyl-2-C-methyl-D-erythritol 2-phosphate (CDP-ME2P) to 2-C-methyl-D-erythritol 2,4-cyclodiphosphate (ME-CPP) with a corresponding release of cytidine 5-monophosphate (CMP).</text>
</comment>
<comment type="catalytic activity">
    <reaction evidence="1">
        <text>4-CDP-2-C-methyl-D-erythritol 2-phosphate = 2-C-methyl-D-erythritol 2,4-cyclic diphosphate + CMP</text>
        <dbReference type="Rhea" id="RHEA:23864"/>
        <dbReference type="ChEBI" id="CHEBI:57919"/>
        <dbReference type="ChEBI" id="CHEBI:58483"/>
        <dbReference type="ChEBI" id="CHEBI:60377"/>
        <dbReference type="EC" id="4.6.1.12"/>
    </reaction>
</comment>
<comment type="cofactor">
    <cofactor evidence="1">
        <name>a divalent metal cation</name>
        <dbReference type="ChEBI" id="CHEBI:60240"/>
    </cofactor>
    <text evidence="1">Binds 1 divalent metal cation per subunit.</text>
</comment>
<comment type="pathway">
    <text evidence="1">Isoprenoid biosynthesis; isopentenyl diphosphate biosynthesis via DXP pathway; isopentenyl diphosphate from 1-deoxy-D-xylulose 5-phosphate: step 4/6.</text>
</comment>
<comment type="subunit">
    <text evidence="1">Homotrimer.</text>
</comment>
<comment type="similarity">
    <text evidence="1">Belongs to the IspF family.</text>
</comment>
<proteinExistence type="inferred from homology"/>
<name>ISPF_EHRCR</name>
<gene>
    <name evidence="1" type="primary">ispF</name>
    <name type="ordered locus">ECH_0156</name>
</gene>
<accession>Q2GHV0</accession>
<feature type="chain" id="PRO_0000237723" description="2-C-methyl-D-erythritol 2,4-cyclodiphosphate synthase">
    <location>
        <begin position="1"/>
        <end position="173"/>
    </location>
</feature>
<feature type="binding site" evidence="1">
    <location>
        <begin position="17"/>
        <end position="19"/>
    </location>
    <ligand>
        <name>4-CDP-2-C-methyl-D-erythritol 2-phosphate</name>
        <dbReference type="ChEBI" id="CHEBI:57919"/>
    </ligand>
</feature>
<feature type="binding site" evidence="1">
    <location>
        <position position="17"/>
    </location>
    <ligand>
        <name>a divalent metal cation</name>
        <dbReference type="ChEBI" id="CHEBI:60240"/>
    </ligand>
</feature>
<feature type="binding site" evidence="1">
    <location>
        <position position="19"/>
    </location>
    <ligand>
        <name>a divalent metal cation</name>
        <dbReference type="ChEBI" id="CHEBI:60240"/>
    </ligand>
</feature>
<feature type="binding site" evidence="1">
    <location>
        <begin position="49"/>
        <end position="50"/>
    </location>
    <ligand>
        <name>4-CDP-2-C-methyl-D-erythritol 2-phosphate</name>
        <dbReference type="ChEBI" id="CHEBI:57919"/>
    </ligand>
</feature>
<feature type="binding site" evidence="1">
    <location>
        <position position="57"/>
    </location>
    <ligand>
        <name>a divalent metal cation</name>
        <dbReference type="ChEBI" id="CHEBI:60240"/>
    </ligand>
</feature>
<feature type="binding site" evidence="1">
    <location>
        <begin position="76"/>
        <end position="80"/>
    </location>
    <ligand>
        <name>4-CDP-2-C-methyl-D-erythritol 2-phosphate</name>
        <dbReference type="ChEBI" id="CHEBI:57919"/>
    </ligand>
</feature>
<feature type="binding site" evidence="1">
    <location>
        <begin position="147"/>
        <end position="150"/>
    </location>
    <ligand>
        <name>4-CDP-2-C-methyl-D-erythritol 2-phosphate</name>
        <dbReference type="ChEBI" id="CHEBI:57919"/>
    </ligand>
</feature>
<feature type="binding site" evidence="1">
    <location>
        <position position="154"/>
    </location>
    <ligand>
        <name>4-CDP-2-C-methyl-D-erythritol 2-phosphate</name>
        <dbReference type="ChEBI" id="CHEBI:57919"/>
    </ligand>
</feature>
<feature type="binding site" evidence="1">
    <location>
        <position position="157"/>
    </location>
    <ligand>
        <name>4-CDP-2-C-methyl-D-erythritol 2-phosphate</name>
        <dbReference type="ChEBI" id="CHEBI:57919"/>
    </ligand>
</feature>
<feature type="site" description="Transition state stabilizer" evidence="1">
    <location>
        <position position="49"/>
    </location>
</feature>
<feature type="site" description="Transition state stabilizer" evidence="1">
    <location>
        <position position="148"/>
    </location>
</feature>
<sequence>MNQHPNKPIFKVGIGYDVHKFDNTCYNDANTFITICGIKINYHKKIIAHSDGDVGLHALTDAILGAVGCGSIGQHFPNTDNTWKNIKSDYFLIEAQKKAQEKGYSISNADITIICEQPKIMPHALEMQEYIANLICIDPSCINVKATTTEKLGFLGRKEGIAAQAIVLCCLQN</sequence>
<reference key="1">
    <citation type="journal article" date="2006" name="PLoS Genet.">
        <title>Comparative genomics of emerging human ehrlichiosis agents.</title>
        <authorList>
            <person name="Dunning Hotopp J.C."/>
            <person name="Lin M."/>
            <person name="Madupu R."/>
            <person name="Crabtree J."/>
            <person name="Angiuoli S.V."/>
            <person name="Eisen J.A."/>
            <person name="Seshadri R."/>
            <person name="Ren Q."/>
            <person name="Wu M."/>
            <person name="Utterback T.R."/>
            <person name="Smith S."/>
            <person name="Lewis M."/>
            <person name="Khouri H."/>
            <person name="Zhang C."/>
            <person name="Niu H."/>
            <person name="Lin Q."/>
            <person name="Ohashi N."/>
            <person name="Zhi N."/>
            <person name="Nelson W.C."/>
            <person name="Brinkac L.M."/>
            <person name="Dodson R.J."/>
            <person name="Rosovitz M.J."/>
            <person name="Sundaram J.P."/>
            <person name="Daugherty S.C."/>
            <person name="Davidsen T."/>
            <person name="Durkin A.S."/>
            <person name="Gwinn M.L."/>
            <person name="Haft D.H."/>
            <person name="Selengut J.D."/>
            <person name="Sullivan S.A."/>
            <person name="Zafar N."/>
            <person name="Zhou L."/>
            <person name="Benahmed F."/>
            <person name="Forberger H."/>
            <person name="Halpin R."/>
            <person name="Mulligan S."/>
            <person name="Robinson J."/>
            <person name="White O."/>
            <person name="Rikihisa Y."/>
            <person name="Tettelin H."/>
        </authorList>
    </citation>
    <scope>NUCLEOTIDE SEQUENCE [LARGE SCALE GENOMIC DNA]</scope>
    <source>
        <strain>ATCC CRL-10679 / Arkansas</strain>
    </source>
</reference>
<protein>
    <recommendedName>
        <fullName evidence="1">2-C-methyl-D-erythritol 2,4-cyclodiphosphate synthase</fullName>
        <shortName evidence="1">MECDP-synthase</shortName>
        <shortName evidence="1">MECPP-synthase</shortName>
        <shortName evidence="1">MECPS</shortName>
        <ecNumber evidence="1">4.6.1.12</ecNumber>
    </recommendedName>
</protein>
<organism>
    <name type="scientific">Ehrlichia chaffeensis (strain ATCC CRL-10679 / Arkansas)</name>
    <dbReference type="NCBI Taxonomy" id="205920"/>
    <lineage>
        <taxon>Bacteria</taxon>
        <taxon>Pseudomonadati</taxon>
        <taxon>Pseudomonadota</taxon>
        <taxon>Alphaproteobacteria</taxon>
        <taxon>Rickettsiales</taxon>
        <taxon>Anaplasmataceae</taxon>
        <taxon>Ehrlichia</taxon>
    </lineage>
</organism>